<feature type="chain" id="PRO_1000074975" description="Elongation factor G">
    <location>
        <begin position="1"/>
        <end position="693"/>
    </location>
</feature>
<feature type="domain" description="tr-type G">
    <location>
        <begin position="6"/>
        <end position="286"/>
    </location>
</feature>
<feature type="binding site" evidence="1">
    <location>
        <begin position="15"/>
        <end position="22"/>
    </location>
    <ligand>
        <name>GTP</name>
        <dbReference type="ChEBI" id="CHEBI:37565"/>
    </ligand>
</feature>
<feature type="binding site" evidence="1">
    <location>
        <begin position="83"/>
        <end position="87"/>
    </location>
    <ligand>
        <name>GTP</name>
        <dbReference type="ChEBI" id="CHEBI:37565"/>
    </ligand>
</feature>
<feature type="binding site" evidence="1">
    <location>
        <begin position="137"/>
        <end position="140"/>
    </location>
    <ligand>
        <name>GTP</name>
        <dbReference type="ChEBI" id="CHEBI:37565"/>
    </ligand>
</feature>
<comment type="function">
    <text evidence="1">Catalyzes the GTP-dependent ribosomal translocation step during translation elongation. During this step, the ribosome changes from the pre-translocational (PRE) to the post-translocational (POST) state as the newly formed A-site-bound peptidyl-tRNA and P-site-bound deacylated tRNA move to the P and E sites, respectively. Catalyzes the coordinated movement of the two tRNA molecules, the mRNA and conformational changes in the ribosome.</text>
</comment>
<comment type="subcellular location">
    <subcellularLocation>
        <location evidence="1">Cytoplasm</location>
    </subcellularLocation>
</comment>
<comment type="similarity">
    <text evidence="1">Belongs to the TRAFAC class translation factor GTPase superfamily. Classic translation factor GTPase family. EF-G/EF-2 subfamily.</text>
</comment>
<name>EFG_KARMG</name>
<dbReference type="EMBL" id="CP000770">
    <property type="protein sequence ID" value="ABS30617.1"/>
    <property type="molecule type" value="Genomic_DNA"/>
</dbReference>
<dbReference type="SMR" id="A8Z666"/>
<dbReference type="STRING" id="444179.SMGWSS_220"/>
<dbReference type="KEGG" id="smg:SMGWSS_220"/>
<dbReference type="HOGENOM" id="CLU_002794_4_1_10"/>
<dbReference type="Proteomes" id="UP000000781">
    <property type="component" value="Chromosome"/>
</dbReference>
<dbReference type="GO" id="GO:0005737">
    <property type="term" value="C:cytoplasm"/>
    <property type="evidence" value="ECO:0007669"/>
    <property type="project" value="UniProtKB-SubCell"/>
</dbReference>
<dbReference type="GO" id="GO:0005525">
    <property type="term" value="F:GTP binding"/>
    <property type="evidence" value="ECO:0007669"/>
    <property type="project" value="UniProtKB-UniRule"/>
</dbReference>
<dbReference type="GO" id="GO:0003924">
    <property type="term" value="F:GTPase activity"/>
    <property type="evidence" value="ECO:0007669"/>
    <property type="project" value="InterPro"/>
</dbReference>
<dbReference type="GO" id="GO:0003746">
    <property type="term" value="F:translation elongation factor activity"/>
    <property type="evidence" value="ECO:0007669"/>
    <property type="project" value="UniProtKB-UniRule"/>
</dbReference>
<dbReference type="GO" id="GO:0032790">
    <property type="term" value="P:ribosome disassembly"/>
    <property type="evidence" value="ECO:0007669"/>
    <property type="project" value="TreeGrafter"/>
</dbReference>
<dbReference type="CDD" id="cd01886">
    <property type="entry name" value="EF-G"/>
    <property type="match status" value="1"/>
</dbReference>
<dbReference type="CDD" id="cd16262">
    <property type="entry name" value="EFG_III"/>
    <property type="match status" value="1"/>
</dbReference>
<dbReference type="CDD" id="cd01434">
    <property type="entry name" value="EFG_mtEFG1_IV"/>
    <property type="match status" value="1"/>
</dbReference>
<dbReference type="CDD" id="cd03713">
    <property type="entry name" value="EFG_mtEFG_C"/>
    <property type="match status" value="1"/>
</dbReference>
<dbReference type="CDD" id="cd04088">
    <property type="entry name" value="EFG_mtEFG_II"/>
    <property type="match status" value="1"/>
</dbReference>
<dbReference type="FunFam" id="2.40.30.10:FF:000006">
    <property type="entry name" value="Elongation factor G"/>
    <property type="match status" value="1"/>
</dbReference>
<dbReference type="FunFam" id="3.30.230.10:FF:000003">
    <property type="entry name" value="Elongation factor G"/>
    <property type="match status" value="1"/>
</dbReference>
<dbReference type="FunFam" id="3.30.70.240:FF:000001">
    <property type="entry name" value="Elongation factor G"/>
    <property type="match status" value="1"/>
</dbReference>
<dbReference type="FunFam" id="3.30.70.870:FF:000001">
    <property type="entry name" value="Elongation factor G"/>
    <property type="match status" value="1"/>
</dbReference>
<dbReference type="FunFam" id="3.40.50.300:FF:000029">
    <property type="entry name" value="Elongation factor G"/>
    <property type="match status" value="1"/>
</dbReference>
<dbReference type="Gene3D" id="3.30.230.10">
    <property type="match status" value="1"/>
</dbReference>
<dbReference type="Gene3D" id="3.30.70.240">
    <property type="match status" value="1"/>
</dbReference>
<dbReference type="Gene3D" id="3.30.70.870">
    <property type="entry name" value="Elongation Factor G (Translational Gtpase), domain 3"/>
    <property type="match status" value="1"/>
</dbReference>
<dbReference type="Gene3D" id="3.40.50.300">
    <property type="entry name" value="P-loop containing nucleotide triphosphate hydrolases"/>
    <property type="match status" value="1"/>
</dbReference>
<dbReference type="Gene3D" id="2.40.30.10">
    <property type="entry name" value="Translation factors"/>
    <property type="match status" value="1"/>
</dbReference>
<dbReference type="HAMAP" id="MF_00054_B">
    <property type="entry name" value="EF_G_EF_2_B"/>
    <property type="match status" value="1"/>
</dbReference>
<dbReference type="InterPro" id="IPR041095">
    <property type="entry name" value="EFG_II"/>
</dbReference>
<dbReference type="InterPro" id="IPR009022">
    <property type="entry name" value="EFG_III"/>
</dbReference>
<dbReference type="InterPro" id="IPR035647">
    <property type="entry name" value="EFG_III/V"/>
</dbReference>
<dbReference type="InterPro" id="IPR047872">
    <property type="entry name" value="EFG_IV"/>
</dbReference>
<dbReference type="InterPro" id="IPR035649">
    <property type="entry name" value="EFG_V"/>
</dbReference>
<dbReference type="InterPro" id="IPR000640">
    <property type="entry name" value="EFG_V-like"/>
</dbReference>
<dbReference type="InterPro" id="IPR004161">
    <property type="entry name" value="EFTu-like_2"/>
</dbReference>
<dbReference type="InterPro" id="IPR031157">
    <property type="entry name" value="G_TR_CS"/>
</dbReference>
<dbReference type="InterPro" id="IPR027417">
    <property type="entry name" value="P-loop_NTPase"/>
</dbReference>
<dbReference type="InterPro" id="IPR020568">
    <property type="entry name" value="Ribosomal_Su5_D2-typ_SF"/>
</dbReference>
<dbReference type="InterPro" id="IPR014721">
    <property type="entry name" value="Ribsml_uS5_D2-typ_fold_subgr"/>
</dbReference>
<dbReference type="InterPro" id="IPR005225">
    <property type="entry name" value="Small_GTP-bd"/>
</dbReference>
<dbReference type="InterPro" id="IPR000795">
    <property type="entry name" value="T_Tr_GTP-bd_dom"/>
</dbReference>
<dbReference type="InterPro" id="IPR009000">
    <property type="entry name" value="Transl_B-barrel_sf"/>
</dbReference>
<dbReference type="InterPro" id="IPR004540">
    <property type="entry name" value="Transl_elong_EFG/EF2"/>
</dbReference>
<dbReference type="InterPro" id="IPR005517">
    <property type="entry name" value="Transl_elong_EFG/EF2_IV"/>
</dbReference>
<dbReference type="NCBIfam" id="TIGR00484">
    <property type="entry name" value="EF-G"/>
    <property type="match status" value="1"/>
</dbReference>
<dbReference type="NCBIfam" id="NF009381">
    <property type="entry name" value="PRK12740.1-5"/>
    <property type="match status" value="1"/>
</dbReference>
<dbReference type="NCBIfam" id="TIGR00231">
    <property type="entry name" value="small_GTP"/>
    <property type="match status" value="1"/>
</dbReference>
<dbReference type="PANTHER" id="PTHR43261:SF1">
    <property type="entry name" value="RIBOSOME-RELEASING FACTOR 2, MITOCHONDRIAL"/>
    <property type="match status" value="1"/>
</dbReference>
<dbReference type="PANTHER" id="PTHR43261">
    <property type="entry name" value="TRANSLATION ELONGATION FACTOR G-RELATED"/>
    <property type="match status" value="1"/>
</dbReference>
<dbReference type="Pfam" id="PF00679">
    <property type="entry name" value="EFG_C"/>
    <property type="match status" value="1"/>
</dbReference>
<dbReference type="Pfam" id="PF14492">
    <property type="entry name" value="EFG_III"/>
    <property type="match status" value="1"/>
</dbReference>
<dbReference type="Pfam" id="PF03764">
    <property type="entry name" value="EFG_IV"/>
    <property type="match status" value="1"/>
</dbReference>
<dbReference type="Pfam" id="PF00009">
    <property type="entry name" value="GTP_EFTU"/>
    <property type="match status" value="1"/>
</dbReference>
<dbReference type="Pfam" id="PF03144">
    <property type="entry name" value="GTP_EFTU_D2"/>
    <property type="match status" value="1"/>
</dbReference>
<dbReference type="PRINTS" id="PR00315">
    <property type="entry name" value="ELONGATNFCT"/>
</dbReference>
<dbReference type="SMART" id="SM00838">
    <property type="entry name" value="EFG_C"/>
    <property type="match status" value="1"/>
</dbReference>
<dbReference type="SMART" id="SM00889">
    <property type="entry name" value="EFG_IV"/>
    <property type="match status" value="1"/>
</dbReference>
<dbReference type="SUPFAM" id="SSF54980">
    <property type="entry name" value="EF-G C-terminal domain-like"/>
    <property type="match status" value="2"/>
</dbReference>
<dbReference type="SUPFAM" id="SSF52540">
    <property type="entry name" value="P-loop containing nucleoside triphosphate hydrolases"/>
    <property type="match status" value="1"/>
</dbReference>
<dbReference type="SUPFAM" id="SSF54211">
    <property type="entry name" value="Ribosomal protein S5 domain 2-like"/>
    <property type="match status" value="1"/>
</dbReference>
<dbReference type="SUPFAM" id="SSF50447">
    <property type="entry name" value="Translation proteins"/>
    <property type="match status" value="1"/>
</dbReference>
<dbReference type="PROSITE" id="PS00301">
    <property type="entry name" value="G_TR_1"/>
    <property type="match status" value="1"/>
</dbReference>
<dbReference type="PROSITE" id="PS51722">
    <property type="entry name" value="G_TR_2"/>
    <property type="match status" value="1"/>
</dbReference>
<reference key="1">
    <citation type="journal article" date="2007" name="Proc. Natl. Acad. Sci. U.S.A.">
        <title>Parallel genomic evolution and metabolic interdependence in an ancient symbiosis.</title>
        <authorList>
            <person name="McCutcheon J.P."/>
            <person name="Moran N.A."/>
        </authorList>
    </citation>
    <scope>NUCLEOTIDE SEQUENCE [LARGE SCALE GENOMIC DNA]</scope>
    <source>
        <strain>GWSS</strain>
    </source>
</reference>
<keyword id="KW-0963">Cytoplasm</keyword>
<keyword id="KW-0251">Elongation factor</keyword>
<keyword id="KW-0342">GTP-binding</keyword>
<keyword id="KW-0547">Nucleotide-binding</keyword>
<keyword id="KW-0648">Protein biosynthesis</keyword>
<sequence length="693" mass="78215">MKNNLKYTRNIGIAAHIDAGKTTTTERILFYTGINHKIGEVHDGTATMDWMEQEQERGITITSAATKCEWLYNNNIYKINIIDTPGHVDFTVEVERSLRVLDGMVALFSAVDGVEPQSETVWRQADKYKVPRIGFVNKMDRQGADFFNVCEQIKSNLGANCLILQIPIGIEDNFQGVVDIISKKAIIWDEKNYGTSYNIRTIPEELLELTNKYRNILIETISEYDYDIMGKYFSNPNEISENDIISSIKKSTINLDIVPIICGSSFKNKGVQVMLDAICRYLPSPIDIKETKGINPKTEKEEIRKHNSKEPFSALAFKIATDSFVGRLAFFRVYSGQLKSGTYILNSRSGNKERISRIYQMHANKQNPVNIIEAGDIGAAVGFKDIKTGDTLCDENYPIIYENISFPDPVIGLAIEPKYKSDIDKMSLALSKLSEEDPTFIVRNDKYTGQTIISGMGELHLEIILDRMEREFKVKVNKGNPQVEYKEALTNSIEHREIYKKQTGGRGKYADILFKLEPGKKGAQGLEFINKVKGGNIPKEYIPSIEKAFKEAMKNGPLYGYEINNARIILIDGSYHSVDSDQLSFELASKIGFKNAAKKTNPIILEPIMKLEVLTPPENMGNIVGDINRRRGIIQGMEENRSNSKIIKALVPLSELFGYVTILRTLSSGRATSTMEFYKYKPKPAPYNILNKK</sequence>
<evidence type="ECO:0000255" key="1">
    <source>
        <dbReference type="HAMAP-Rule" id="MF_00054"/>
    </source>
</evidence>
<proteinExistence type="inferred from homology"/>
<organism>
    <name type="scientific">Karelsulcia muelleri (strain GWSS)</name>
    <name type="common">Sulcia muelleri</name>
    <dbReference type="NCBI Taxonomy" id="444179"/>
    <lineage>
        <taxon>Bacteria</taxon>
        <taxon>Pseudomonadati</taxon>
        <taxon>Bacteroidota</taxon>
        <taxon>Flavobacteriia</taxon>
        <taxon>Flavobacteriales</taxon>
        <taxon>Candidatus Karelsulcia</taxon>
    </lineage>
</organism>
<protein>
    <recommendedName>
        <fullName evidence="1">Elongation factor G</fullName>
        <shortName evidence="1">EF-G</shortName>
    </recommendedName>
</protein>
<gene>
    <name evidence="1" type="primary">fusA</name>
    <name type="ordered locus">SMGWSS_220</name>
</gene>
<accession>A8Z666</accession>